<dbReference type="EMBL" id="AY596297">
    <property type="protein sequence ID" value="AAV46116.1"/>
    <property type="molecule type" value="Genomic_DNA"/>
</dbReference>
<dbReference type="RefSeq" id="WP_004960839.1">
    <property type="nucleotide sequence ID" value="NZ_CP039138.1"/>
</dbReference>
<dbReference type="STRING" id="272569.rrnAC1165"/>
<dbReference type="PaxDb" id="272569-rrnAC1165"/>
<dbReference type="EnsemblBacteria" id="AAV46116">
    <property type="protein sequence ID" value="AAV46116"/>
    <property type="gene ID" value="rrnAC1165"/>
</dbReference>
<dbReference type="KEGG" id="hma:rrnAC1165"/>
<dbReference type="PATRIC" id="fig|272569.17.peg.1882"/>
<dbReference type="eggNOG" id="arCOG02119">
    <property type="taxonomic scope" value="Archaea"/>
</dbReference>
<dbReference type="HOGENOM" id="CLU_138334_0_0_2"/>
<dbReference type="Proteomes" id="UP000001169">
    <property type="component" value="Chromosome I"/>
</dbReference>
<dbReference type="HAMAP" id="MF_01223">
    <property type="entry name" value="UPF0212"/>
    <property type="match status" value="1"/>
</dbReference>
<dbReference type="InterPro" id="IPR007564">
    <property type="entry name" value="UPF0212"/>
</dbReference>
<dbReference type="NCBIfam" id="NF003035">
    <property type="entry name" value="PRK03922.1"/>
    <property type="match status" value="1"/>
</dbReference>
<dbReference type="PANTHER" id="PTHR42199">
    <property type="entry name" value="UPF0212 PROTEIN MJ0068"/>
    <property type="match status" value="1"/>
</dbReference>
<dbReference type="PANTHER" id="PTHR42199:SF1">
    <property type="entry name" value="UPF0212 PROTEIN TK1194"/>
    <property type="match status" value="1"/>
</dbReference>
<dbReference type="Pfam" id="PF04475">
    <property type="entry name" value="DUF555"/>
    <property type="match status" value="1"/>
</dbReference>
<organism>
    <name type="scientific">Haloarcula marismortui (strain ATCC 43049 / DSM 3752 / JCM 8966 / VKM B-1809)</name>
    <name type="common">Halobacterium marismortui</name>
    <dbReference type="NCBI Taxonomy" id="272569"/>
    <lineage>
        <taxon>Archaea</taxon>
        <taxon>Methanobacteriati</taxon>
        <taxon>Methanobacteriota</taxon>
        <taxon>Stenosarchaea group</taxon>
        <taxon>Halobacteria</taxon>
        <taxon>Halobacteriales</taxon>
        <taxon>Haloarculaceae</taxon>
        <taxon>Haloarcula</taxon>
    </lineage>
</organism>
<evidence type="ECO:0000255" key="1">
    <source>
        <dbReference type="HAMAP-Rule" id="MF_01223"/>
    </source>
</evidence>
<evidence type="ECO:0000256" key="2">
    <source>
        <dbReference type="SAM" id="MobiDB-lite"/>
    </source>
</evidence>
<feature type="chain" id="PRO_0000068272" description="UPF0212 protein rrnAC1165">
    <location>
        <begin position="1"/>
        <end position="157"/>
    </location>
</feature>
<feature type="region of interest" description="Disordered" evidence="2">
    <location>
        <begin position="105"/>
        <end position="157"/>
    </location>
</feature>
<feature type="compositionally biased region" description="Acidic residues" evidence="2">
    <location>
        <begin position="106"/>
        <end position="157"/>
    </location>
</feature>
<sequence>MNCRVVVEAAVPVYDVASADEAVRIAISKTGEMLNPDLNYVEINMGDRHCPHCGETLEPAFLAADESLVALELEMTVFNVERDEHAARIARKEIGQRLENIPLDVLEIEEIPEESDETTEDESSSAESEADADDPPSDQSADESDDVLPEFEELIDE</sequence>
<protein>
    <recommendedName>
        <fullName evidence="1">UPF0212 protein rrnAC1165</fullName>
    </recommendedName>
</protein>
<proteinExistence type="inferred from homology"/>
<keyword id="KW-1185">Reference proteome</keyword>
<gene>
    <name type="ordered locus">rrnAC1165</name>
</gene>
<name>Y1165_HALMA</name>
<accession>Q5V2Y6</accession>
<reference key="1">
    <citation type="journal article" date="2004" name="Genome Res.">
        <title>Genome sequence of Haloarcula marismortui: a halophilic archaeon from the Dead Sea.</title>
        <authorList>
            <person name="Baliga N.S."/>
            <person name="Bonneau R."/>
            <person name="Facciotti M.T."/>
            <person name="Pan M."/>
            <person name="Glusman G."/>
            <person name="Deutsch E.W."/>
            <person name="Shannon P."/>
            <person name="Chiu Y."/>
            <person name="Weng R.S."/>
            <person name="Gan R.R."/>
            <person name="Hung P."/>
            <person name="Date S.V."/>
            <person name="Marcotte E."/>
            <person name="Hood L."/>
            <person name="Ng W.V."/>
        </authorList>
    </citation>
    <scope>NUCLEOTIDE SEQUENCE [LARGE SCALE GENOMIC DNA]</scope>
    <source>
        <strain>ATCC 43049 / DSM 3752 / JCM 8966 / VKM B-1809</strain>
    </source>
</reference>
<comment type="similarity">
    <text evidence="1">Belongs to the UPF0212 family.</text>
</comment>